<gene>
    <name evidence="1" type="primary">dapB</name>
    <name type="ordered locus">MT2843</name>
</gene>
<proteinExistence type="inferred from homology"/>
<feature type="chain" id="PRO_0000427027" description="4-hydroxy-tetrahydrodipicolinate reductase">
    <location>
        <begin position="1"/>
        <end position="245"/>
    </location>
</feature>
<feature type="active site" description="Proton donor/acceptor" evidence="1">
    <location>
        <position position="132"/>
    </location>
</feature>
<feature type="active site" description="Proton donor" evidence="1">
    <location>
        <position position="136"/>
    </location>
</feature>
<feature type="binding site" evidence="1">
    <location>
        <begin position="7"/>
        <end position="12"/>
    </location>
    <ligand>
        <name>NAD(+)</name>
        <dbReference type="ChEBI" id="CHEBI:57540"/>
    </ligand>
</feature>
<feature type="binding site" evidence="1">
    <location>
        <position position="33"/>
    </location>
    <ligand>
        <name>NAD(+)</name>
        <dbReference type="ChEBI" id="CHEBI:57540"/>
    </ligand>
</feature>
<feature type="binding site" evidence="1">
    <location>
        <begin position="75"/>
        <end position="77"/>
    </location>
    <ligand>
        <name>NAD(+)</name>
        <dbReference type="ChEBI" id="CHEBI:57540"/>
    </ligand>
</feature>
<feature type="binding site" evidence="1">
    <location>
        <begin position="102"/>
        <end position="105"/>
    </location>
    <ligand>
        <name>NAD(+)</name>
        <dbReference type="ChEBI" id="CHEBI:57540"/>
    </ligand>
</feature>
<feature type="binding site" evidence="1">
    <location>
        <position position="133"/>
    </location>
    <ligand>
        <name>(S)-2,3,4,5-tetrahydrodipicolinate</name>
        <dbReference type="ChEBI" id="CHEBI:16845"/>
    </ligand>
</feature>
<feature type="binding site" evidence="1">
    <location>
        <begin position="142"/>
        <end position="143"/>
    </location>
    <ligand>
        <name>(S)-2,3,4,5-tetrahydrodipicolinate</name>
        <dbReference type="ChEBI" id="CHEBI:16845"/>
    </ligand>
</feature>
<comment type="function">
    <text evidence="1">Catalyzes the conversion of 4-hydroxy-tetrahydrodipicolinate (HTPA) to tetrahydrodipicolinate.</text>
</comment>
<comment type="catalytic activity">
    <reaction evidence="1">
        <text>(S)-2,3,4,5-tetrahydrodipicolinate + NAD(+) + H2O = (2S,4S)-4-hydroxy-2,3,4,5-tetrahydrodipicolinate + NADH + H(+)</text>
        <dbReference type="Rhea" id="RHEA:35323"/>
        <dbReference type="ChEBI" id="CHEBI:15377"/>
        <dbReference type="ChEBI" id="CHEBI:15378"/>
        <dbReference type="ChEBI" id="CHEBI:16845"/>
        <dbReference type="ChEBI" id="CHEBI:57540"/>
        <dbReference type="ChEBI" id="CHEBI:57945"/>
        <dbReference type="ChEBI" id="CHEBI:67139"/>
        <dbReference type="EC" id="1.17.1.8"/>
    </reaction>
</comment>
<comment type="catalytic activity">
    <reaction evidence="1">
        <text>(S)-2,3,4,5-tetrahydrodipicolinate + NADP(+) + H2O = (2S,4S)-4-hydroxy-2,3,4,5-tetrahydrodipicolinate + NADPH + H(+)</text>
        <dbReference type="Rhea" id="RHEA:35331"/>
        <dbReference type="ChEBI" id="CHEBI:15377"/>
        <dbReference type="ChEBI" id="CHEBI:15378"/>
        <dbReference type="ChEBI" id="CHEBI:16845"/>
        <dbReference type="ChEBI" id="CHEBI:57783"/>
        <dbReference type="ChEBI" id="CHEBI:58349"/>
        <dbReference type="ChEBI" id="CHEBI:67139"/>
        <dbReference type="EC" id="1.17.1.8"/>
    </reaction>
</comment>
<comment type="pathway">
    <text evidence="1">Amino-acid biosynthesis; L-lysine biosynthesis via DAP pathway; (S)-tetrahydrodipicolinate from L-aspartate: step 4/4.</text>
</comment>
<comment type="subunit">
    <text evidence="1">Homotetramer.</text>
</comment>
<comment type="subcellular location">
    <subcellularLocation>
        <location evidence="1">Cytoplasm</location>
    </subcellularLocation>
</comment>
<comment type="similarity">
    <text evidence="1">Belongs to the DapB family.</text>
</comment>
<keyword id="KW-0028">Amino-acid biosynthesis</keyword>
<keyword id="KW-0963">Cytoplasm</keyword>
<keyword id="KW-0220">Diaminopimelate biosynthesis</keyword>
<keyword id="KW-0457">Lysine biosynthesis</keyword>
<keyword id="KW-0520">NAD</keyword>
<keyword id="KW-0521">NADP</keyword>
<keyword id="KW-0560">Oxidoreductase</keyword>
<keyword id="KW-1185">Reference proteome</keyword>
<name>DAPB_MYCTO</name>
<evidence type="ECO:0000255" key="1">
    <source>
        <dbReference type="HAMAP-Rule" id="MF_00102"/>
    </source>
</evidence>
<dbReference type="EC" id="1.17.1.8" evidence="1"/>
<dbReference type="EMBL" id="AE000516">
    <property type="protein sequence ID" value="AAK47162.1"/>
    <property type="molecule type" value="Genomic_DNA"/>
</dbReference>
<dbReference type="PIR" id="D70882">
    <property type="entry name" value="D70882"/>
</dbReference>
<dbReference type="RefSeq" id="WP_003414099.1">
    <property type="nucleotide sequence ID" value="NZ_KK341227.1"/>
</dbReference>
<dbReference type="SMR" id="P9WP22"/>
<dbReference type="GeneID" id="45426762"/>
<dbReference type="KEGG" id="mtc:MT2843"/>
<dbReference type="PATRIC" id="fig|83331.31.peg.3066"/>
<dbReference type="HOGENOM" id="CLU_047479_0_1_11"/>
<dbReference type="UniPathway" id="UPA00034">
    <property type="reaction ID" value="UER00018"/>
</dbReference>
<dbReference type="Proteomes" id="UP000001020">
    <property type="component" value="Chromosome"/>
</dbReference>
<dbReference type="GO" id="GO:0005829">
    <property type="term" value="C:cytosol"/>
    <property type="evidence" value="ECO:0007669"/>
    <property type="project" value="TreeGrafter"/>
</dbReference>
<dbReference type="GO" id="GO:0008839">
    <property type="term" value="F:4-hydroxy-tetrahydrodipicolinate reductase"/>
    <property type="evidence" value="ECO:0007669"/>
    <property type="project" value="UniProtKB-EC"/>
</dbReference>
<dbReference type="GO" id="GO:0051287">
    <property type="term" value="F:NAD binding"/>
    <property type="evidence" value="ECO:0007669"/>
    <property type="project" value="UniProtKB-UniRule"/>
</dbReference>
<dbReference type="GO" id="GO:0050661">
    <property type="term" value="F:NADP binding"/>
    <property type="evidence" value="ECO:0007669"/>
    <property type="project" value="UniProtKB-UniRule"/>
</dbReference>
<dbReference type="GO" id="GO:0016726">
    <property type="term" value="F:oxidoreductase activity, acting on CH or CH2 groups, NAD or NADP as acceptor"/>
    <property type="evidence" value="ECO:0007669"/>
    <property type="project" value="UniProtKB-UniRule"/>
</dbReference>
<dbReference type="GO" id="GO:0019877">
    <property type="term" value="P:diaminopimelate biosynthetic process"/>
    <property type="evidence" value="ECO:0007669"/>
    <property type="project" value="UniProtKB-UniRule"/>
</dbReference>
<dbReference type="GO" id="GO:0009089">
    <property type="term" value="P:lysine biosynthetic process via diaminopimelate"/>
    <property type="evidence" value="ECO:0007669"/>
    <property type="project" value="UniProtKB-UniRule"/>
</dbReference>
<dbReference type="CDD" id="cd02274">
    <property type="entry name" value="DHDPR_N"/>
    <property type="match status" value="1"/>
</dbReference>
<dbReference type="FunFam" id="3.30.360.10:FF:000009">
    <property type="entry name" value="4-hydroxy-tetrahydrodipicolinate reductase"/>
    <property type="match status" value="1"/>
</dbReference>
<dbReference type="Gene3D" id="3.30.360.10">
    <property type="entry name" value="Dihydrodipicolinate Reductase, domain 2"/>
    <property type="match status" value="1"/>
</dbReference>
<dbReference type="Gene3D" id="3.40.50.720">
    <property type="entry name" value="NAD(P)-binding Rossmann-like Domain"/>
    <property type="match status" value="1"/>
</dbReference>
<dbReference type="HAMAP" id="MF_00102">
    <property type="entry name" value="DapB"/>
    <property type="match status" value="1"/>
</dbReference>
<dbReference type="InterPro" id="IPR022663">
    <property type="entry name" value="DapB_C"/>
</dbReference>
<dbReference type="InterPro" id="IPR000846">
    <property type="entry name" value="DapB_N"/>
</dbReference>
<dbReference type="InterPro" id="IPR022664">
    <property type="entry name" value="DapB_N_CS"/>
</dbReference>
<dbReference type="InterPro" id="IPR023940">
    <property type="entry name" value="DHDPR_bac"/>
</dbReference>
<dbReference type="InterPro" id="IPR036291">
    <property type="entry name" value="NAD(P)-bd_dom_sf"/>
</dbReference>
<dbReference type="NCBIfam" id="TIGR00036">
    <property type="entry name" value="dapB"/>
    <property type="match status" value="1"/>
</dbReference>
<dbReference type="PANTHER" id="PTHR20836:SF0">
    <property type="entry name" value="4-HYDROXY-TETRAHYDRODIPICOLINATE REDUCTASE 1, CHLOROPLASTIC-RELATED"/>
    <property type="match status" value="1"/>
</dbReference>
<dbReference type="PANTHER" id="PTHR20836">
    <property type="entry name" value="DIHYDRODIPICOLINATE REDUCTASE"/>
    <property type="match status" value="1"/>
</dbReference>
<dbReference type="Pfam" id="PF05173">
    <property type="entry name" value="DapB_C"/>
    <property type="match status" value="1"/>
</dbReference>
<dbReference type="Pfam" id="PF01113">
    <property type="entry name" value="DapB_N"/>
    <property type="match status" value="1"/>
</dbReference>
<dbReference type="PIRSF" id="PIRSF000161">
    <property type="entry name" value="DHPR"/>
    <property type="match status" value="1"/>
</dbReference>
<dbReference type="SUPFAM" id="SSF55347">
    <property type="entry name" value="Glyceraldehyde-3-phosphate dehydrogenase-like, C-terminal domain"/>
    <property type="match status" value="1"/>
</dbReference>
<dbReference type="SUPFAM" id="SSF51735">
    <property type="entry name" value="NAD(P)-binding Rossmann-fold domains"/>
    <property type="match status" value="1"/>
</dbReference>
<dbReference type="PROSITE" id="PS01298">
    <property type="entry name" value="DAPB"/>
    <property type="match status" value="1"/>
</dbReference>
<organism>
    <name type="scientific">Mycobacterium tuberculosis (strain CDC 1551 / Oshkosh)</name>
    <dbReference type="NCBI Taxonomy" id="83331"/>
    <lineage>
        <taxon>Bacteria</taxon>
        <taxon>Bacillati</taxon>
        <taxon>Actinomycetota</taxon>
        <taxon>Actinomycetes</taxon>
        <taxon>Mycobacteriales</taxon>
        <taxon>Mycobacteriaceae</taxon>
        <taxon>Mycobacterium</taxon>
        <taxon>Mycobacterium tuberculosis complex</taxon>
    </lineage>
</organism>
<reference key="1">
    <citation type="journal article" date="2002" name="J. Bacteriol.">
        <title>Whole-genome comparison of Mycobacterium tuberculosis clinical and laboratory strains.</title>
        <authorList>
            <person name="Fleischmann R.D."/>
            <person name="Alland D."/>
            <person name="Eisen J.A."/>
            <person name="Carpenter L."/>
            <person name="White O."/>
            <person name="Peterson J.D."/>
            <person name="DeBoy R.T."/>
            <person name="Dodson R.J."/>
            <person name="Gwinn M.L."/>
            <person name="Haft D.H."/>
            <person name="Hickey E.K."/>
            <person name="Kolonay J.F."/>
            <person name="Nelson W.C."/>
            <person name="Umayam L.A."/>
            <person name="Ermolaeva M.D."/>
            <person name="Salzberg S.L."/>
            <person name="Delcher A."/>
            <person name="Utterback T.R."/>
            <person name="Weidman J.F."/>
            <person name="Khouri H.M."/>
            <person name="Gill J."/>
            <person name="Mikula A."/>
            <person name="Bishai W."/>
            <person name="Jacobs W.R. Jr."/>
            <person name="Venter J.C."/>
            <person name="Fraser C.M."/>
        </authorList>
    </citation>
    <scope>NUCLEOTIDE SEQUENCE [LARGE SCALE GENOMIC DNA]</scope>
    <source>
        <strain>CDC 1551 / Oshkosh</strain>
    </source>
</reference>
<sequence>MRVGVLGAKGKVGATMVRAVAAADDLTLSAELDAGDPLSLLTDGNTEVVIDFTHPDVVMGNLEFLIDNGIHAVVGTTGFTAERFQQVESWLVAKPNTSVLIAPNFAIGAVLSMHFAKQAARFFDSAEVIELHHPHKADAPSGTAARTAKLIAEARKGLPPNPDATSTSLPGARGADVDGIPVHAVRLAGLVAHQEVLFGTEGETLTIRHDSLDRTSFVPGVLLAVRRIAERPGLTVGLEPLLDLH</sequence>
<protein>
    <recommendedName>
        <fullName evidence="1">4-hydroxy-tetrahydrodipicolinate reductase</fullName>
        <shortName evidence="1">HTPA reductase</shortName>
        <ecNumber evidence="1">1.17.1.8</ecNumber>
    </recommendedName>
</protein>
<accession>P9WP22</accession>
<accession>L0TDI3</accession>
<accession>O33315</accession>
<accession>P72024</accession>